<gene>
    <name type="ordered locus">MJ0130</name>
</gene>
<sequence length="425" mass="48568">MFYKEENFKKTEIGEIPEDWEIVELKDVCKKIKAGGTPKTSVEEYYKNGTIPFVKIEDITNSNKYLTNTKIKITEEGLNNSNAWIVPKNSVLFAMYGSIGETAINKIEVATNQAILGIIPKDNILESEFLYYILAKNKNYYSKLGMQTTQKNLNAQIVKSFKIPLPPLEEQKQIAKILTKIDEGIEIIEKSINKLERIKKGLMHKLLTKGIGHSRFKKSEIGEIPEDWEVFEIKDIFEVKTGTTPSTKKSEYWENGEINWITPLDLSRLNEKIYIGSSERKVTKIALEKCNLNLIPKGSIIISTRAPVGYVAVLTVESTFNQGCKGLFQKNNDSVNTEFYAYYLKFKKNLLENLSGGSTFKELSKSMLENFKIPLPPLEEQKQIAKILSSVDKSIELKKQKKEKLQRMKKKIMELLLTGKVRVKT</sequence>
<keyword id="KW-0002">3D-structure</keyword>
<keyword id="KW-0175">Coiled coil</keyword>
<keyword id="KW-0238">DNA-binding</keyword>
<keyword id="KW-1185">Reference proteome</keyword>
<keyword id="KW-0680">Restriction system</keyword>
<proteinExistence type="evidence at protein level"/>
<reference key="1">
    <citation type="journal article" date="1996" name="Science">
        <title>Complete genome sequence of the methanogenic archaeon, Methanococcus jannaschii.</title>
        <authorList>
            <person name="Bult C.J."/>
            <person name="White O."/>
            <person name="Olsen G.J."/>
            <person name="Zhou L."/>
            <person name="Fleischmann R.D."/>
            <person name="Sutton G.G."/>
            <person name="Blake J.A."/>
            <person name="FitzGerald L.M."/>
            <person name="Clayton R.A."/>
            <person name="Gocayne J.D."/>
            <person name="Kerlavage A.R."/>
            <person name="Dougherty B.A."/>
            <person name="Tomb J.-F."/>
            <person name="Adams M.D."/>
            <person name="Reich C.I."/>
            <person name="Overbeek R."/>
            <person name="Kirkness E.F."/>
            <person name="Weinstock K.G."/>
            <person name="Merrick J.M."/>
            <person name="Glodek A."/>
            <person name="Scott J.L."/>
            <person name="Geoghagen N.S.M."/>
            <person name="Weidman J.F."/>
            <person name="Fuhrmann J.L."/>
            <person name="Nguyen D."/>
            <person name="Utterback T.R."/>
            <person name="Kelley J.M."/>
            <person name="Peterson J.D."/>
            <person name="Sadow P.W."/>
            <person name="Hanna M.C."/>
            <person name="Cotton M.D."/>
            <person name="Roberts K.M."/>
            <person name="Hurst M.A."/>
            <person name="Kaine B.P."/>
            <person name="Borodovsky M."/>
            <person name="Klenk H.-P."/>
            <person name="Fraser C.M."/>
            <person name="Smith H.O."/>
            <person name="Woese C.R."/>
            <person name="Venter J.C."/>
        </authorList>
    </citation>
    <scope>NUCLEOTIDE SEQUENCE [LARGE SCALE GENOMIC DNA]</scope>
    <source>
        <strain>ATCC 43067 / DSM 2661 / JAL-1 / JCM 10045 / NBRC 100440</strain>
    </source>
</reference>
<reference key="2">
    <citation type="submission" date="1998-02" db="EMBL/GenBank/DDBJ databases">
        <authorList>
            <person name="Bult C.J."/>
            <person name="White O."/>
            <person name="Olsen G.J."/>
            <person name="Zhou L."/>
            <person name="Fleischmann R.D."/>
            <person name="Sutton G.G."/>
            <person name="Blake J.A."/>
            <person name="FitzGerald L.M."/>
            <person name="Clayton R.A."/>
            <person name="Gocayne J.D."/>
            <person name="Kerlavage A.R."/>
            <person name="Dougherty B.A."/>
            <person name="Tomb J.-F."/>
            <person name="Adams M.D."/>
            <person name="Reich C.I."/>
            <person name="Overbeek R."/>
            <person name="Kirkness E.F."/>
            <person name="Weinstock K.G."/>
            <person name="Merrick J.M."/>
            <person name="Glodek A."/>
            <person name="Scott J.L."/>
            <person name="Geoghagen N.S.M."/>
            <person name="Weidman J.F."/>
            <person name="Fuhrmann J.L."/>
            <person name="Nguyen D."/>
            <person name="Utterback T.R."/>
            <person name="Kelley J.M."/>
            <person name="Peterson J.D."/>
            <person name="Sadow P.W."/>
            <person name="Hanna M.C."/>
            <person name="Cotton M.D."/>
            <person name="Roberts K.M."/>
            <person name="Hurst M.A."/>
            <person name="Kaine B.P."/>
            <person name="Borodovsky M."/>
            <person name="Klenk H.-P."/>
            <person name="Fraser C.M."/>
            <person name="Smith H.O."/>
            <person name="Woese C.R."/>
            <person name="Venter J.C."/>
        </authorList>
    </citation>
    <scope>SEQUENCE REVISION</scope>
</reference>
<reference key="3">
    <citation type="journal article" date="2003" name="Nucleic Acids Res.">
        <title>A nomenclature for restriction enzymes, DNA methyltransferases, homing endonucleases and their genes.</title>
        <authorList>
            <person name="Roberts R.J."/>
            <person name="Belfort M."/>
            <person name="Bestor T."/>
            <person name="Bhagwat A.S."/>
            <person name="Bickle T.A."/>
            <person name="Bitinaite J."/>
            <person name="Blumenthal R.M."/>
            <person name="Degtyarev S.K."/>
            <person name="Dryden D.T."/>
            <person name="Dybvig K."/>
            <person name="Firman K."/>
            <person name="Gromova E.S."/>
            <person name="Gumport R.I."/>
            <person name="Halford S.E."/>
            <person name="Hattman S."/>
            <person name="Heitman J."/>
            <person name="Hornby D.P."/>
            <person name="Janulaitis A."/>
            <person name="Jeltsch A."/>
            <person name="Josephsen J."/>
            <person name="Kiss A."/>
            <person name="Klaenhammer T.R."/>
            <person name="Kobayashi I."/>
            <person name="Kong H."/>
            <person name="Krueger D.H."/>
            <person name="Lacks S."/>
            <person name="Marinus M.G."/>
            <person name="Miyahara M."/>
            <person name="Morgan R.D."/>
            <person name="Murray N.E."/>
            <person name="Nagaraja V."/>
            <person name="Piekarowicz A."/>
            <person name="Pingoud A."/>
            <person name="Raleigh E."/>
            <person name="Rao D.N."/>
            <person name="Reich N."/>
            <person name="Repin V.E."/>
            <person name="Selker E.U."/>
            <person name="Shaw P.C."/>
            <person name="Stein D.C."/>
            <person name="Stoddard B.L."/>
            <person name="Szybalski W."/>
            <person name="Trautner T.A."/>
            <person name="Van Etten J.L."/>
            <person name="Vitor J.M."/>
            <person name="Wilson G.G."/>
            <person name="Xu S.Y."/>
        </authorList>
    </citation>
    <scope>NOMENCLATURE</scope>
</reference>
<reference evidence="6" key="4">
    <citation type="journal article" date="2005" name="Proc. Natl. Acad. Sci. U.S.A.">
        <title>Crystal structure of DNA sequence specificity subunit of a type I restriction-modification enzyme and its functional implications.</title>
        <authorList>
            <person name="Kim J.-S."/>
            <person name="DeGiovanni A."/>
            <person name="Jancarik J."/>
            <person name="Adams P.D."/>
            <person name="Yokota H."/>
            <person name="Kim R."/>
            <person name="Kim S.-H."/>
        </authorList>
    </citation>
    <scope>X-RAY CRYSTALLOGRAPHY (2.4 ANGSTROMS)</scope>
    <scope>SUBUNIT</scope>
    <scope>DOMAIN</scope>
    <source>
        <strain>ATCC 43067 / DSM 2661 / JAL-1 / JCM 10045 / NBRC 100440</strain>
    </source>
</reference>
<dbReference type="EMBL" id="L77117">
    <property type="protein sequence ID" value="AAB98112.1"/>
    <property type="status" value="ALT_FRAME"/>
    <property type="molecule type" value="Genomic_DNA"/>
</dbReference>
<dbReference type="PDB" id="1YF2">
    <property type="method" value="X-ray"/>
    <property type="resolution" value="2.40 A"/>
    <property type="chains" value="A/B=1-425"/>
</dbReference>
<dbReference type="PDBsum" id="1YF2"/>
<dbReference type="SMR" id="Q57594"/>
<dbReference type="FunCoup" id="Q57594">
    <property type="interactions" value="1"/>
</dbReference>
<dbReference type="STRING" id="243232.MJ_0130"/>
<dbReference type="REBASE" id="154997">
    <property type="entry name" value="S.VscVS12ORF1031P"/>
</dbReference>
<dbReference type="REBASE" id="182833">
    <property type="entry name" value="S.Bli37I"/>
</dbReference>
<dbReference type="REBASE" id="191882">
    <property type="entry name" value="S2.Apa1468ORF2954P"/>
</dbReference>
<dbReference type="REBASE" id="203440">
    <property type="entry name" value="S3.Lpl434ORF2272P"/>
</dbReference>
<dbReference type="REBASE" id="203797">
    <property type="entry name" value="S.Ppe892ORF47P"/>
</dbReference>
<dbReference type="REBASE" id="203829">
    <property type="entry name" value="S.Bli141ORF4598P"/>
</dbReference>
<dbReference type="REBASE" id="203832">
    <property type="entry name" value="S.Bli27ORF807P"/>
</dbReference>
<dbReference type="REBASE" id="290906">
    <property type="entry name" value="S.Msa27082ORF3559P"/>
</dbReference>
<dbReference type="REBASE" id="3901">
    <property type="entry name" value="S.MjaVII"/>
</dbReference>
<dbReference type="REBASE" id="767818">
    <property type="entry name" value="S2.SspSPORF2374P"/>
</dbReference>
<dbReference type="PaxDb" id="243232-MJ_0130"/>
<dbReference type="EnsemblBacteria" id="AAB98112">
    <property type="protein sequence ID" value="AAB98112"/>
    <property type="gene ID" value="MJ_0130"/>
</dbReference>
<dbReference type="KEGG" id="mja:MJ_0130"/>
<dbReference type="eggNOG" id="arCOG02626">
    <property type="taxonomic scope" value="Archaea"/>
</dbReference>
<dbReference type="HOGENOM" id="CLU_021095_10_3_2"/>
<dbReference type="InParanoid" id="Q57594"/>
<dbReference type="OrthoDB" id="84651at2157"/>
<dbReference type="PhylomeDB" id="Q57594"/>
<dbReference type="EvolutionaryTrace" id="Q57594"/>
<dbReference type="PRO" id="PR:Q57594"/>
<dbReference type="Proteomes" id="UP000000805">
    <property type="component" value="Chromosome"/>
</dbReference>
<dbReference type="GO" id="GO:0003677">
    <property type="term" value="F:DNA binding"/>
    <property type="evidence" value="ECO:0007669"/>
    <property type="project" value="UniProtKB-KW"/>
</dbReference>
<dbReference type="GO" id="GO:0009307">
    <property type="term" value="P:DNA restriction-modification system"/>
    <property type="evidence" value="ECO:0007669"/>
    <property type="project" value="UniProtKB-KW"/>
</dbReference>
<dbReference type="CDD" id="cd17273">
    <property type="entry name" value="RMtype1_S_EcoJA69PI-TRD1-CR1_like"/>
    <property type="match status" value="1"/>
</dbReference>
<dbReference type="CDD" id="cd17275">
    <property type="entry name" value="RMtype1_S_MjaORF132P-TRD1-CR1_like"/>
    <property type="match status" value="1"/>
</dbReference>
<dbReference type="Gene3D" id="1.10.287.1120">
    <property type="entry name" value="Bipartite methylase S protein"/>
    <property type="match status" value="1"/>
</dbReference>
<dbReference type="Gene3D" id="3.90.220.20">
    <property type="entry name" value="DNA methylase specificity domains"/>
    <property type="match status" value="2"/>
</dbReference>
<dbReference type="InterPro" id="IPR000055">
    <property type="entry name" value="Restrct_endonuc_typeI_TRD"/>
</dbReference>
<dbReference type="InterPro" id="IPR044946">
    <property type="entry name" value="Restrct_endonuc_typeI_TRD_sf"/>
</dbReference>
<dbReference type="InterPro" id="IPR052021">
    <property type="entry name" value="Type-I_RS_S_subunit"/>
</dbReference>
<dbReference type="PANTHER" id="PTHR30408:SF12">
    <property type="entry name" value="TYPE I RESTRICTION ENZYME MJAVIII SPECIFICITY SUBUNIT"/>
    <property type="match status" value="1"/>
</dbReference>
<dbReference type="PANTHER" id="PTHR30408">
    <property type="entry name" value="TYPE-1 RESTRICTION ENZYME ECOKI SPECIFICITY PROTEIN"/>
    <property type="match status" value="1"/>
</dbReference>
<dbReference type="Pfam" id="PF01420">
    <property type="entry name" value="Methylase_S"/>
    <property type="match status" value="2"/>
</dbReference>
<dbReference type="SUPFAM" id="SSF116734">
    <property type="entry name" value="DNA methylase specificity domain"/>
    <property type="match status" value="2"/>
</dbReference>
<organism>
    <name type="scientific">Methanocaldococcus jannaschii (strain ATCC 43067 / DSM 2661 / JAL-1 / JCM 10045 / NBRC 100440)</name>
    <name type="common">Methanococcus jannaschii</name>
    <dbReference type="NCBI Taxonomy" id="243232"/>
    <lineage>
        <taxon>Archaea</taxon>
        <taxon>Methanobacteriati</taxon>
        <taxon>Methanobacteriota</taxon>
        <taxon>Methanomada group</taxon>
        <taxon>Methanococci</taxon>
        <taxon>Methanococcales</taxon>
        <taxon>Methanocaldococcaceae</taxon>
        <taxon>Methanocaldococcus</taxon>
    </lineage>
</organism>
<evidence type="ECO:0000250" key="1">
    <source>
        <dbReference type="UniProtKB" id="P05719"/>
    </source>
</evidence>
<evidence type="ECO:0000269" key="2">
    <source>
    </source>
</evidence>
<evidence type="ECO:0000303" key="3">
    <source>
    </source>
</evidence>
<evidence type="ECO:0000305" key="4"/>
<evidence type="ECO:0000305" key="5">
    <source>
    </source>
</evidence>
<evidence type="ECO:0007744" key="6">
    <source>
        <dbReference type="PDB" id="1YF2"/>
    </source>
</evidence>
<evidence type="ECO:0007829" key="7">
    <source>
        <dbReference type="PDB" id="1YF2"/>
    </source>
</evidence>
<protein>
    <recommendedName>
        <fullName evidence="4">Type I restriction enzyme MjaVII specificity subunit</fullName>
        <shortName>S protein</shortName>
    </recommendedName>
    <alternativeName>
        <fullName evidence="3">Type I specificity subunit S.MjaVII</fullName>
        <shortName evidence="3">S.MjaVII</shortName>
    </alternativeName>
    <alternativeName>
        <fullName>Type-1 restriction enzyme MjaXIP specificity subunit</fullName>
        <shortName>S.MjaXIP</shortName>
    </alternativeName>
</protein>
<comment type="function">
    <text evidence="1 3 5">The specificity (S) subunit of a type I restriction enzyme; this subunit dictates DNA sequence specificity. The M and S subunits together form a methyltransferase (MTase) that methylates A-3 on the top and bottom strands of the sequence 5'-CAAN(7)TGG-3'. In the presence of the R subunit the complex can also act as an endonuclease, binding to the same target sequence but cutting the DNA some distance from this site. Whether the DNA is cut or modified depends on the methylation state of the target sequence. When the target site is unmodified, the DNA is cut. When the target site is hemimethylated, the complex acts as a maintenance MTase modifying the DNA so that both strands become methylated (Probable) (PubMed:12654995). After locating a non-methylated recognition site, the enzyme complex serves as a molecular motor that translocates DNA in an ATP-dependent manner until a collision occurs that triggers cleavage (By similarity).</text>
</comment>
<comment type="subunit">
    <text evidence="5">The type I restriction/modification system is composed of three polypeptides R, M and S.</text>
</comment>
<comment type="domain">
    <text evidence="2 5">Contains two target DNA recognition domains (TDR), each specifying recognition of one of the two defined components of the target sequence (Probable). The TDRs show high structural similarity and each forms a globular structure. The two TDRs are separated by 2 long, conserved antiparallel helices that form a coiled coil structure. These conserved regions may act as a molecular ruler for the separation between the two recognized DNA sequences (PubMed:15728358).</text>
</comment>
<comment type="miscellaneous">
    <text evidence="1">Type I restriction and modification enzymes are complex, multifunctional systems which require ATP, S-adenosyl methionine and Mg(2+) as cofactors and, in addition to their endonucleolytic and methylase activities, are potent DNA-dependent ATPases.</text>
</comment>
<comment type="similarity">
    <text evidence="4">Belongs to the type-I restriction system S methylase family.</text>
</comment>
<comment type="sequence caution" evidence="4">
    <conflict type="frameshift">
        <sequence resource="EMBL-CDS" id="AAB98112"/>
    </conflict>
</comment>
<name>T1S1_METJA</name>
<accession>Q57594</accession>
<feature type="chain" id="PRO_0000106708" description="Type I restriction enzyme MjaVII specificity subunit">
    <location>
        <begin position="1"/>
        <end position="425"/>
    </location>
</feature>
<feature type="region of interest" description="Target recognition domain 1" evidence="5">
    <location>
        <begin position="9"/>
        <end position="168"/>
    </location>
</feature>
<feature type="region of interest" description="Central conserved region (CCR)" evidence="5">
    <location>
        <begin position="169"/>
        <end position="208"/>
    </location>
</feature>
<feature type="region of interest" description="Target recognition domain 2" evidence="5">
    <location>
        <begin position="209"/>
        <end position="368"/>
    </location>
</feature>
<feature type="region of interest" description="Distal conserved region (DCR)" evidence="5">
    <location>
        <begin position="369"/>
        <end position="418"/>
    </location>
</feature>
<feature type="coiled-coil region" evidence="2 6">
    <location>
        <begin position="169"/>
        <end position="208"/>
    </location>
</feature>
<feature type="coiled-coil region" evidence="2 6">
    <location>
        <begin position="369"/>
        <end position="418"/>
    </location>
</feature>
<feature type="strand" evidence="7">
    <location>
        <begin position="12"/>
        <end position="15"/>
    </location>
</feature>
<feature type="strand" evidence="7">
    <location>
        <begin position="17"/>
        <end position="19"/>
    </location>
</feature>
<feature type="helix" evidence="7">
    <location>
        <begin position="25"/>
        <end position="28"/>
    </location>
</feature>
<feature type="strand" evidence="7">
    <location>
        <begin position="29"/>
        <end position="34"/>
    </location>
</feature>
<feature type="helix" evidence="7">
    <location>
        <begin position="43"/>
        <end position="45"/>
    </location>
</feature>
<feature type="turn" evidence="7">
    <location>
        <begin position="46"/>
        <end position="48"/>
    </location>
</feature>
<feature type="strand" evidence="7">
    <location>
        <begin position="51"/>
        <end position="54"/>
    </location>
</feature>
<feature type="helix" evidence="7">
    <location>
        <begin position="56"/>
        <end position="60"/>
    </location>
</feature>
<feature type="strand" evidence="7">
    <location>
        <begin position="62"/>
        <end position="66"/>
    </location>
</feature>
<feature type="strand" evidence="7">
    <location>
        <begin position="70"/>
        <end position="73"/>
    </location>
</feature>
<feature type="helix" evidence="7">
    <location>
        <begin position="75"/>
        <end position="79"/>
    </location>
</feature>
<feature type="strand" evidence="7">
    <location>
        <begin position="91"/>
        <end position="94"/>
    </location>
</feature>
<feature type="strand" evidence="7">
    <location>
        <begin position="96"/>
        <end position="98"/>
    </location>
</feature>
<feature type="strand" evidence="7">
    <location>
        <begin position="102"/>
        <end position="107"/>
    </location>
</feature>
<feature type="strand" evidence="7">
    <location>
        <begin position="109"/>
        <end position="111"/>
    </location>
</feature>
<feature type="strand" evidence="7">
    <location>
        <begin position="113"/>
        <end position="120"/>
    </location>
</feature>
<feature type="turn" evidence="7">
    <location>
        <begin position="122"/>
        <end position="124"/>
    </location>
</feature>
<feature type="helix" evidence="7">
    <location>
        <begin position="127"/>
        <end position="136"/>
    </location>
</feature>
<feature type="helix" evidence="7">
    <location>
        <begin position="138"/>
        <end position="142"/>
    </location>
</feature>
<feature type="strand" evidence="7">
    <location>
        <begin position="145"/>
        <end position="149"/>
    </location>
</feature>
<feature type="helix" evidence="7">
    <location>
        <begin position="155"/>
        <end position="159"/>
    </location>
</feature>
<feature type="helix" evidence="7">
    <location>
        <begin position="168"/>
        <end position="209"/>
    </location>
</feature>
<feature type="strand" evidence="7">
    <location>
        <begin position="222"/>
        <end position="225"/>
    </location>
</feature>
<feature type="strand" evidence="7">
    <location>
        <begin position="229"/>
        <end position="232"/>
    </location>
</feature>
<feature type="helix" evidence="7">
    <location>
        <begin position="233"/>
        <end position="236"/>
    </location>
</feature>
<feature type="strand" evidence="7">
    <location>
        <begin position="237"/>
        <end position="241"/>
    </location>
</feature>
<feature type="helix" evidence="7">
    <location>
        <begin position="250"/>
        <end position="252"/>
    </location>
</feature>
<feature type="turn" evidence="7">
    <location>
        <begin position="253"/>
        <end position="255"/>
    </location>
</feature>
<feature type="strand" evidence="7">
    <location>
        <begin position="258"/>
        <end position="261"/>
    </location>
</feature>
<feature type="helix" evidence="7">
    <location>
        <begin position="263"/>
        <end position="267"/>
    </location>
</feature>
<feature type="turn" evidence="7">
    <location>
        <begin position="268"/>
        <end position="271"/>
    </location>
</feature>
<feature type="strand" evidence="7">
    <location>
        <begin position="273"/>
        <end position="275"/>
    </location>
</feature>
<feature type="strand" evidence="7">
    <location>
        <begin position="279"/>
        <end position="282"/>
    </location>
</feature>
<feature type="helix" evidence="7">
    <location>
        <begin position="284"/>
        <end position="289"/>
    </location>
</feature>
<feature type="strand" evidence="7">
    <location>
        <begin position="300"/>
        <end position="303"/>
    </location>
</feature>
<feature type="strand" evidence="7">
    <location>
        <begin position="305"/>
        <end position="307"/>
    </location>
</feature>
<feature type="strand" evidence="7">
    <location>
        <begin position="311"/>
        <end position="316"/>
    </location>
</feature>
<feature type="strand" evidence="7">
    <location>
        <begin position="318"/>
        <end position="320"/>
    </location>
</feature>
<feature type="strand" evidence="7">
    <location>
        <begin position="324"/>
        <end position="330"/>
    </location>
</feature>
<feature type="helix" evidence="7">
    <location>
        <begin position="337"/>
        <end position="346"/>
    </location>
</feature>
<feature type="helix" evidence="7">
    <location>
        <begin position="348"/>
        <end position="355"/>
    </location>
</feature>
<feature type="strand" evidence="7">
    <location>
        <begin position="357"/>
        <end position="360"/>
    </location>
</feature>
<feature type="helix" evidence="7">
    <location>
        <begin position="365"/>
        <end position="370"/>
    </location>
</feature>
<feature type="strand" evidence="7">
    <location>
        <begin position="372"/>
        <end position="375"/>
    </location>
</feature>
<feature type="helix" evidence="7">
    <location>
        <begin position="378"/>
        <end position="416"/>
    </location>
</feature>
<feature type="strand" evidence="7">
    <location>
        <begin position="418"/>
        <end position="420"/>
    </location>
</feature>